<name>SP5G_LACP7</name>
<dbReference type="EMBL" id="CP000885">
    <property type="protein sequence ID" value="ABX40498.1"/>
    <property type="molecule type" value="Genomic_DNA"/>
</dbReference>
<dbReference type="RefSeq" id="WP_012198141.1">
    <property type="nucleotide sequence ID" value="NC_010001.1"/>
</dbReference>
<dbReference type="SMR" id="A9KR30"/>
<dbReference type="STRING" id="357809.Cphy_0109"/>
<dbReference type="KEGG" id="cpy:Cphy_0109"/>
<dbReference type="eggNOG" id="COG2088">
    <property type="taxonomic scope" value="Bacteria"/>
</dbReference>
<dbReference type="HOGENOM" id="CLU_103669_2_1_9"/>
<dbReference type="OrthoDB" id="9796286at2"/>
<dbReference type="Proteomes" id="UP000000370">
    <property type="component" value="Chromosome"/>
</dbReference>
<dbReference type="GO" id="GO:0000917">
    <property type="term" value="P:division septum assembly"/>
    <property type="evidence" value="ECO:0007669"/>
    <property type="project" value="UniProtKB-KW"/>
</dbReference>
<dbReference type="GO" id="GO:0030435">
    <property type="term" value="P:sporulation resulting in formation of a cellular spore"/>
    <property type="evidence" value="ECO:0007669"/>
    <property type="project" value="InterPro"/>
</dbReference>
<dbReference type="Gene3D" id="3.30.1120.40">
    <property type="entry name" value="Stage V sporulation protein G"/>
    <property type="match status" value="1"/>
</dbReference>
<dbReference type="HAMAP" id="MF_00819">
    <property type="entry name" value="SpoVG"/>
    <property type="match status" value="1"/>
</dbReference>
<dbReference type="InterPro" id="IPR007170">
    <property type="entry name" value="SpoVG"/>
</dbReference>
<dbReference type="InterPro" id="IPR036751">
    <property type="entry name" value="SpoVG_sf"/>
</dbReference>
<dbReference type="NCBIfam" id="NF009749">
    <property type="entry name" value="PRK13259.1"/>
    <property type="match status" value="1"/>
</dbReference>
<dbReference type="PANTHER" id="PTHR38429">
    <property type="entry name" value="SEPTATION PROTEIN SPOVG-RELATED"/>
    <property type="match status" value="1"/>
</dbReference>
<dbReference type="PANTHER" id="PTHR38429:SF1">
    <property type="entry name" value="SEPTATION PROTEIN SPOVG-RELATED"/>
    <property type="match status" value="1"/>
</dbReference>
<dbReference type="Pfam" id="PF04026">
    <property type="entry name" value="SpoVG"/>
    <property type="match status" value="1"/>
</dbReference>
<dbReference type="SUPFAM" id="SSF160537">
    <property type="entry name" value="SpoVG-like"/>
    <property type="match status" value="1"/>
</dbReference>
<sequence>MQITDVRVRRVSKEGKMKAVVSITLDNEFVVHDIKVIEGEKGLFIAMPSRKAGDGEYRDIAHPINSITRDKIQSIILEKYELAALEGNIEEAE</sequence>
<proteinExistence type="inferred from homology"/>
<accession>A9KR30</accession>
<protein>
    <recommendedName>
        <fullName evidence="1">Putative septation protein SpoVG</fullName>
    </recommendedName>
</protein>
<reference key="1">
    <citation type="submission" date="2007-11" db="EMBL/GenBank/DDBJ databases">
        <title>Complete genome sequence of Clostridium phytofermentans ISDg.</title>
        <authorList>
            <person name="Leschine S.B."/>
            <person name="Warnick T.A."/>
            <person name="Blanchard J.L."/>
            <person name="Schnell D.J."/>
            <person name="Petit E.L."/>
            <person name="LaTouf W.G."/>
            <person name="Copeland A."/>
            <person name="Lucas S."/>
            <person name="Lapidus A."/>
            <person name="Barry K."/>
            <person name="Glavina del Rio T."/>
            <person name="Dalin E."/>
            <person name="Tice H."/>
            <person name="Pitluck S."/>
            <person name="Kiss H."/>
            <person name="Brettin T."/>
            <person name="Bruce D."/>
            <person name="Detter J.C."/>
            <person name="Han C."/>
            <person name="Kuske C."/>
            <person name="Schmutz J."/>
            <person name="Larimer F."/>
            <person name="Land M."/>
            <person name="Hauser L."/>
            <person name="Kyrpides N."/>
            <person name="Kim E.A."/>
            <person name="Richardson P."/>
        </authorList>
    </citation>
    <scope>NUCLEOTIDE SEQUENCE [LARGE SCALE GENOMIC DNA]</scope>
    <source>
        <strain>ATCC 700394 / DSM 18823 / ISDg</strain>
    </source>
</reference>
<organism>
    <name type="scientific">Lachnoclostridium phytofermentans (strain ATCC 700394 / DSM 18823 / ISDg)</name>
    <name type="common">Clostridium phytofermentans</name>
    <dbReference type="NCBI Taxonomy" id="357809"/>
    <lineage>
        <taxon>Bacteria</taxon>
        <taxon>Bacillati</taxon>
        <taxon>Bacillota</taxon>
        <taxon>Clostridia</taxon>
        <taxon>Lachnospirales</taxon>
        <taxon>Lachnospiraceae</taxon>
    </lineage>
</organism>
<evidence type="ECO:0000255" key="1">
    <source>
        <dbReference type="HAMAP-Rule" id="MF_00819"/>
    </source>
</evidence>
<feature type="chain" id="PRO_1000083847" description="Putative septation protein SpoVG">
    <location>
        <begin position="1"/>
        <end position="93"/>
    </location>
</feature>
<keyword id="KW-0131">Cell cycle</keyword>
<keyword id="KW-0132">Cell division</keyword>
<keyword id="KW-1185">Reference proteome</keyword>
<keyword id="KW-0717">Septation</keyword>
<gene>
    <name evidence="1" type="primary">spoVG</name>
    <name type="ordered locus">Cphy_0109</name>
</gene>
<comment type="function">
    <text evidence="1">Could be involved in septation.</text>
</comment>
<comment type="similarity">
    <text evidence="1">Belongs to the SpoVG family.</text>
</comment>